<accession>P0C011</accession>
<sequence length="20" mass="2223">FIQYLAPLIPHAVKAISDLI</sequence>
<proteinExistence type="evidence at protein level"/>
<name>KAS2_KASSE</name>
<dbReference type="GO" id="GO:0005576">
    <property type="term" value="C:extracellular region"/>
    <property type="evidence" value="ECO:0007669"/>
    <property type="project" value="UniProtKB-SubCell"/>
</dbReference>
<evidence type="ECO:0000269" key="1">
    <source>
    </source>
</evidence>
<feature type="peptide" id="PRO_0000043809" description="Kassinatuerin-2">
    <location>
        <begin position="1"/>
        <end position="20"/>
    </location>
</feature>
<feature type="modified residue" description="Isoleucine amide" evidence="1">
    <location>
        <position position="20"/>
    </location>
</feature>
<reference key="1">
    <citation type="journal article" date="2000" name="Biochem. Biophys. Res. Commun.">
        <title>Kassinatuerin-1: a peptide with broad-spectrum antimicrobial activity isolated from the skin of the hyperoliid frog, Kassina senegalensis.</title>
        <authorList>
            <person name="Mattute B."/>
            <person name="Knoop F.C."/>
            <person name="Conlon J.M."/>
        </authorList>
    </citation>
    <scope>PROTEIN SEQUENCE</scope>
    <scope>SYNTHESIS</scope>
    <scope>AMIDATION AT ILE-20</scope>
    <scope>MASS SPECTROMETRY</scope>
    <source>
        <tissue>Skin</tissue>
    </source>
</reference>
<comment type="function">
    <text>Has no antimicrobial activities against bacteria (E.coli and S.aureus) nor against the fungus C.albicans.</text>
</comment>
<comment type="subcellular location">
    <subcellularLocation>
        <location>Secreted</location>
    </subcellularLocation>
</comment>
<comment type="tissue specificity">
    <text>Expressed by the skin dorsal glands.</text>
</comment>
<comment type="mass spectrometry" mass="2221.3" method="Electrospray" evidence="1"/>
<keyword id="KW-0027">Amidation</keyword>
<keyword id="KW-0903">Direct protein sequencing</keyword>
<keyword id="KW-0964">Secreted</keyword>
<organism>
    <name type="scientific">Kassina senegalensis</name>
    <name type="common">Senegal running frog</name>
    <dbReference type="NCBI Taxonomy" id="8415"/>
    <lineage>
        <taxon>Eukaryota</taxon>
        <taxon>Metazoa</taxon>
        <taxon>Chordata</taxon>
        <taxon>Craniata</taxon>
        <taxon>Vertebrata</taxon>
        <taxon>Euteleostomi</taxon>
        <taxon>Amphibia</taxon>
        <taxon>Batrachia</taxon>
        <taxon>Anura</taxon>
        <taxon>Neobatrachia</taxon>
        <taxon>Microhyloidea</taxon>
        <taxon>Hyperoliidae</taxon>
        <taxon>Kassina</taxon>
    </lineage>
</organism>
<protein>
    <recommendedName>
        <fullName>Kassinatuerin-2</fullName>
    </recommendedName>
</protein>